<protein>
    <recommendedName>
        <fullName evidence="1">Small ribosomal subunit protein uS15</fullName>
    </recommendedName>
    <alternativeName>
        <fullName evidence="2">30S ribosomal protein S15</fullName>
    </alternativeName>
</protein>
<proteinExistence type="inferred from homology"/>
<reference key="1">
    <citation type="submission" date="2005-09" db="EMBL/GenBank/DDBJ databases">
        <authorList>
            <person name="Glass J.I."/>
            <person name="Lartigue C."/>
            <person name="Pfannkoch C."/>
            <person name="Baden-Tillson H."/>
            <person name="Smith H.O."/>
            <person name="Venter J.C."/>
            <person name="Roske K."/>
            <person name="Wise K.S."/>
            <person name="Calcutt M.J."/>
            <person name="Nelson W.C."/>
            <person name="Nierman W.C."/>
        </authorList>
    </citation>
    <scope>NUCLEOTIDE SEQUENCE [LARGE SCALE GENOMIC DNA]</scope>
    <source>
        <strain>California kid / ATCC 27343 / NCTC 10154</strain>
    </source>
</reference>
<gene>
    <name evidence="1" type="primary">rpsO</name>
    <name type="ordered locus">MCAP_0330</name>
</gene>
<name>RS15_MYCCT</name>
<accession>Q2SSE8</accession>
<organism>
    <name type="scientific">Mycoplasma capricolum subsp. capricolum (strain California kid / ATCC 27343 / NCTC 10154)</name>
    <dbReference type="NCBI Taxonomy" id="340047"/>
    <lineage>
        <taxon>Bacteria</taxon>
        <taxon>Bacillati</taxon>
        <taxon>Mycoplasmatota</taxon>
        <taxon>Mollicutes</taxon>
        <taxon>Mycoplasmataceae</taxon>
        <taxon>Mycoplasma</taxon>
    </lineage>
</organism>
<sequence length="88" mass="10260">MISKEQKLALIKEFGGSEKNTGLAEVQIAILTAEISNMTEHLKMHKKDIPTRRSLLKKVAQRRHFLDYLVKKDVNRYKEIIEKLGIRK</sequence>
<comment type="function">
    <text evidence="1">One of the primary rRNA binding proteins, it binds directly to 16S rRNA where it helps nucleate assembly of the platform of the 30S subunit by binding and bridging several RNA helices of the 16S rRNA.</text>
</comment>
<comment type="function">
    <text evidence="1">Forms an intersubunit bridge (bridge B4) with the 23S rRNA of the 50S subunit in the ribosome.</text>
</comment>
<comment type="subunit">
    <text evidence="1">Part of the 30S ribosomal subunit. Forms a bridge to the 50S subunit in the 70S ribosome, contacting the 23S rRNA.</text>
</comment>
<comment type="similarity">
    <text evidence="1">Belongs to the universal ribosomal protein uS15 family.</text>
</comment>
<dbReference type="EMBL" id="CP000123">
    <property type="protein sequence ID" value="ABC01616.1"/>
    <property type="molecule type" value="Genomic_DNA"/>
</dbReference>
<dbReference type="RefSeq" id="WP_011387216.1">
    <property type="nucleotide sequence ID" value="NC_007633.1"/>
</dbReference>
<dbReference type="SMR" id="Q2SSE8"/>
<dbReference type="GeneID" id="23778714"/>
<dbReference type="KEGG" id="mcp:MCAP_0330"/>
<dbReference type="HOGENOM" id="CLU_148518_0_0_14"/>
<dbReference type="PhylomeDB" id="Q2SSE8"/>
<dbReference type="Proteomes" id="UP000001928">
    <property type="component" value="Chromosome"/>
</dbReference>
<dbReference type="GO" id="GO:0022627">
    <property type="term" value="C:cytosolic small ribosomal subunit"/>
    <property type="evidence" value="ECO:0007669"/>
    <property type="project" value="TreeGrafter"/>
</dbReference>
<dbReference type="GO" id="GO:0019843">
    <property type="term" value="F:rRNA binding"/>
    <property type="evidence" value="ECO:0007669"/>
    <property type="project" value="UniProtKB-UniRule"/>
</dbReference>
<dbReference type="GO" id="GO:0003735">
    <property type="term" value="F:structural constituent of ribosome"/>
    <property type="evidence" value="ECO:0007669"/>
    <property type="project" value="InterPro"/>
</dbReference>
<dbReference type="GO" id="GO:0006412">
    <property type="term" value="P:translation"/>
    <property type="evidence" value="ECO:0007669"/>
    <property type="project" value="UniProtKB-UniRule"/>
</dbReference>
<dbReference type="CDD" id="cd00353">
    <property type="entry name" value="Ribosomal_S15p_S13e"/>
    <property type="match status" value="1"/>
</dbReference>
<dbReference type="Gene3D" id="6.10.250.3130">
    <property type="match status" value="1"/>
</dbReference>
<dbReference type="Gene3D" id="1.10.287.10">
    <property type="entry name" value="S15/NS1, RNA-binding"/>
    <property type="match status" value="1"/>
</dbReference>
<dbReference type="HAMAP" id="MF_01343_B">
    <property type="entry name" value="Ribosomal_uS15_B"/>
    <property type="match status" value="1"/>
</dbReference>
<dbReference type="InterPro" id="IPR000589">
    <property type="entry name" value="Ribosomal_uS15"/>
</dbReference>
<dbReference type="InterPro" id="IPR005290">
    <property type="entry name" value="Ribosomal_uS15_bac-type"/>
</dbReference>
<dbReference type="InterPro" id="IPR009068">
    <property type="entry name" value="uS15_NS1_RNA-bd_sf"/>
</dbReference>
<dbReference type="NCBIfam" id="TIGR00952">
    <property type="entry name" value="S15_bact"/>
    <property type="match status" value="1"/>
</dbReference>
<dbReference type="PANTHER" id="PTHR23321">
    <property type="entry name" value="RIBOSOMAL PROTEIN S15, BACTERIAL AND ORGANELLAR"/>
    <property type="match status" value="1"/>
</dbReference>
<dbReference type="PANTHER" id="PTHR23321:SF26">
    <property type="entry name" value="SMALL RIBOSOMAL SUBUNIT PROTEIN US15M"/>
    <property type="match status" value="1"/>
</dbReference>
<dbReference type="Pfam" id="PF00312">
    <property type="entry name" value="Ribosomal_S15"/>
    <property type="match status" value="1"/>
</dbReference>
<dbReference type="SMART" id="SM01387">
    <property type="entry name" value="Ribosomal_S15"/>
    <property type="match status" value="1"/>
</dbReference>
<dbReference type="SUPFAM" id="SSF47060">
    <property type="entry name" value="S15/NS1 RNA-binding domain"/>
    <property type="match status" value="1"/>
</dbReference>
<evidence type="ECO:0000255" key="1">
    <source>
        <dbReference type="HAMAP-Rule" id="MF_01343"/>
    </source>
</evidence>
<evidence type="ECO:0000305" key="2"/>
<keyword id="KW-0687">Ribonucleoprotein</keyword>
<keyword id="KW-0689">Ribosomal protein</keyword>
<keyword id="KW-0694">RNA-binding</keyword>
<keyword id="KW-0699">rRNA-binding</keyword>
<feature type="chain" id="PRO_0000255507" description="Small ribosomal subunit protein uS15">
    <location>
        <begin position="1"/>
        <end position="88"/>
    </location>
</feature>